<accession>C1AHF8</accession>
<name>METXA_MYCBT</name>
<gene>
    <name evidence="1" type="primary">metXA</name>
    <name type="ordered locus">JTY_3411</name>
</gene>
<proteinExistence type="inferred from homology"/>
<sequence>MTISDVPTQTLPAEGEIGLIDVGSLQLESGAVIDDVCIAVQRWGKLSPARDNVVVVLHALTGDSHITGPAGPGHPTPGWWDGVAGPGAPIDTTRWCAVATNVLGGCRGSTGPSSLARDGKPWGSRFPLISIRDQVQADVAALAALGITEVAAVVGGSMGGARALEWVVGYPDRVRAGLLLAVGARATADQIGTQTTQIAAIKADPDWQSGDYHETGRAPDAGLRLARRFAHLTYRGEIELDTRFANHNQGNEDPTAGGRYAVQSYLEHQGDKLLSRFDAGSYVILTEALNSHDVGRGRGGVSAALRACPVPVVVGGITSDRLYPLRLQQELADLLPGCAGLRVVESVYGHDGFLVETEAVGELIRQTLGLADREGACRR</sequence>
<organism>
    <name type="scientific">Mycobacterium bovis (strain BCG / Tokyo 172 / ATCC 35737 / TMC 1019)</name>
    <dbReference type="NCBI Taxonomy" id="561275"/>
    <lineage>
        <taxon>Bacteria</taxon>
        <taxon>Bacillati</taxon>
        <taxon>Actinomycetota</taxon>
        <taxon>Actinomycetes</taxon>
        <taxon>Mycobacteriales</taxon>
        <taxon>Mycobacteriaceae</taxon>
        <taxon>Mycobacterium</taxon>
        <taxon>Mycobacterium tuberculosis complex</taxon>
    </lineage>
</organism>
<feature type="chain" id="PRO_1000132722" description="Homoserine O-acetyltransferase">
    <location>
        <begin position="1"/>
        <end position="379"/>
    </location>
</feature>
<feature type="domain" description="AB hydrolase-1" evidence="1">
    <location>
        <begin position="52"/>
        <end position="356"/>
    </location>
</feature>
<feature type="active site" description="Nucleophile" evidence="1">
    <location>
        <position position="157"/>
    </location>
</feature>
<feature type="active site" evidence="1">
    <location>
        <position position="320"/>
    </location>
</feature>
<feature type="active site" evidence="1">
    <location>
        <position position="350"/>
    </location>
</feature>
<feature type="binding site" evidence="1">
    <location>
        <position position="227"/>
    </location>
    <ligand>
        <name>substrate</name>
    </ligand>
</feature>
<feature type="binding site" evidence="1">
    <location>
        <position position="351"/>
    </location>
    <ligand>
        <name>substrate</name>
    </ligand>
</feature>
<reference key="1">
    <citation type="journal article" date="2009" name="Vaccine">
        <title>Whole genome sequence analysis of Mycobacterium bovis bacillus Calmette-Guerin (BCG) Tokyo 172: a comparative study of BCG vaccine substrains.</title>
        <authorList>
            <person name="Seki M."/>
            <person name="Honda I."/>
            <person name="Fujita I."/>
            <person name="Yano I."/>
            <person name="Yamamoto S."/>
            <person name="Koyama A."/>
        </authorList>
    </citation>
    <scope>NUCLEOTIDE SEQUENCE [LARGE SCALE GENOMIC DNA]</scope>
    <source>
        <strain>BCG / Tokyo 172 / ATCC 35737 / TMC 1019</strain>
    </source>
</reference>
<comment type="function">
    <text evidence="1">Transfers an acetyl group from acetyl-CoA to L-homoserine, forming acetyl-L-homoserine.</text>
</comment>
<comment type="catalytic activity">
    <reaction evidence="1">
        <text>L-homoserine + acetyl-CoA = O-acetyl-L-homoserine + CoA</text>
        <dbReference type="Rhea" id="RHEA:13701"/>
        <dbReference type="ChEBI" id="CHEBI:57287"/>
        <dbReference type="ChEBI" id="CHEBI:57288"/>
        <dbReference type="ChEBI" id="CHEBI:57476"/>
        <dbReference type="ChEBI" id="CHEBI:57716"/>
        <dbReference type="EC" id="2.3.1.31"/>
    </reaction>
</comment>
<comment type="pathway">
    <text evidence="1">Amino-acid biosynthesis; L-methionine biosynthesis via de novo pathway; O-acetyl-L-homoserine from L-homoserine: step 1/1.</text>
</comment>
<comment type="subunit">
    <text evidence="1">Homodimer.</text>
</comment>
<comment type="subcellular location">
    <subcellularLocation>
        <location evidence="1">Cytoplasm</location>
    </subcellularLocation>
</comment>
<comment type="similarity">
    <text evidence="1">Belongs to the AB hydrolase superfamily. MetX family.</text>
</comment>
<dbReference type="EC" id="2.3.1.31" evidence="1"/>
<dbReference type="EMBL" id="AP010918">
    <property type="protein sequence ID" value="BAH27687.1"/>
    <property type="molecule type" value="Genomic_DNA"/>
</dbReference>
<dbReference type="SMR" id="C1AHF8"/>
<dbReference type="ESTHER" id="myctu-metx">
    <property type="family name" value="Homoserine_transacetylase"/>
</dbReference>
<dbReference type="KEGG" id="mbt:JTY_3411"/>
<dbReference type="HOGENOM" id="CLU_028760_1_0_11"/>
<dbReference type="UniPathway" id="UPA00051">
    <property type="reaction ID" value="UER00074"/>
</dbReference>
<dbReference type="GO" id="GO:0005737">
    <property type="term" value="C:cytoplasm"/>
    <property type="evidence" value="ECO:0007669"/>
    <property type="project" value="UniProtKB-SubCell"/>
</dbReference>
<dbReference type="GO" id="GO:0004414">
    <property type="term" value="F:homoserine O-acetyltransferase activity"/>
    <property type="evidence" value="ECO:0007669"/>
    <property type="project" value="UniProtKB-UniRule"/>
</dbReference>
<dbReference type="GO" id="GO:0009092">
    <property type="term" value="P:homoserine metabolic process"/>
    <property type="evidence" value="ECO:0007669"/>
    <property type="project" value="TreeGrafter"/>
</dbReference>
<dbReference type="GO" id="GO:0009086">
    <property type="term" value="P:methionine biosynthetic process"/>
    <property type="evidence" value="ECO:0007669"/>
    <property type="project" value="UniProtKB-UniRule"/>
</dbReference>
<dbReference type="FunFam" id="3.40.50.1820:FF:000324">
    <property type="entry name" value="Homoserine O-acetyltransferase"/>
    <property type="match status" value="1"/>
</dbReference>
<dbReference type="Gene3D" id="3.40.50.1820">
    <property type="entry name" value="alpha/beta hydrolase"/>
    <property type="match status" value="1"/>
</dbReference>
<dbReference type="HAMAP" id="MF_00296">
    <property type="entry name" value="MetX_acyltransf"/>
    <property type="match status" value="1"/>
</dbReference>
<dbReference type="InterPro" id="IPR000073">
    <property type="entry name" value="AB_hydrolase_1"/>
</dbReference>
<dbReference type="InterPro" id="IPR029058">
    <property type="entry name" value="AB_hydrolase_fold"/>
</dbReference>
<dbReference type="InterPro" id="IPR008220">
    <property type="entry name" value="HAT_MetX-like"/>
</dbReference>
<dbReference type="NCBIfam" id="TIGR01392">
    <property type="entry name" value="homoserO_Ac_trn"/>
    <property type="match status" value="1"/>
</dbReference>
<dbReference type="NCBIfam" id="NF001209">
    <property type="entry name" value="PRK00175.1"/>
    <property type="match status" value="1"/>
</dbReference>
<dbReference type="PANTHER" id="PTHR32268">
    <property type="entry name" value="HOMOSERINE O-ACETYLTRANSFERASE"/>
    <property type="match status" value="1"/>
</dbReference>
<dbReference type="PANTHER" id="PTHR32268:SF11">
    <property type="entry name" value="HOMOSERINE O-ACETYLTRANSFERASE"/>
    <property type="match status" value="1"/>
</dbReference>
<dbReference type="Pfam" id="PF00561">
    <property type="entry name" value="Abhydrolase_1"/>
    <property type="match status" value="1"/>
</dbReference>
<dbReference type="PIRSF" id="PIRSF000443">
    <property type="entry name" value="Homoser_Ac_trans"/>
    <property type="match status" value="1"/>
</dbReference>
<dbReference type="SUPFAM" id="SSF53474">
    <property type="entry name" value="alpha/beta-Hydrolases"/>
    <property type="match status" value="1"/>
</dbReference>
<evidence type="ECO:0000255" key="1">
    <source>
        <dbReference type="HAMAP-Rule" id="MF_00296"/>
    </source>
</evidence>
<keyword id="KW-0012">Acyltransferase</keyword>
<keyword id="KW-0028">Amino-acid biosynthesis</keyword>
<keyword id="KW-0963">Cytoplasm</keyword>
<keyword id="KW-0486">Methionine biosynthesis</keyword>
<keyword id="KW-0808">Transferase</keyword>
<protein>
    <recommendedName>
        <fullName evidence="1">Homoserine O-acetyltransferase</fullName>
        <shortName evidence="1">HAT</shortName>
        <ecNumber evidence="1">2.3.1.31</ecNumber>
    </recommendedName>
    <alternativeName>
        <fullName evidence="1">Homoserine transacetylase</fullName>
        <shortName evidence="1">HTA</shortName>
    </alternativeName>
</protein>